<comment type="function">
    <text evidence="1">Catalyzes the conversion of 3-deoxy-D-arabino-heptulosonate 7-phosphate (DAHP) to dehydroquinate (DHQ).</text>
</comment>
<comment type="catalytic activity">
    <reaction evidence="1">
        <text>7-phospho-2-dehydro-3-deoxy-D-arabino-heptonate = 3-dehydroquinate + phosphate</text>
        <dbReference type="Rhea" id="RHEA:21968"/>
        <dbReference type="ChEBI" id="CHEBI:32364"/>
        <dbReference type="ChEBI" id="CHEBI:43474"/>
        <dbReference type="ChEBI" id="CHEBI:58394"/>
        <dbReference type="EC" id="4.2.3.4"/>
    </reaction>
</comment>
<comment type="cofactor">
    <cofactor evidence="1">
        <name>Co(2+)</name>
        <dbReference type="ChEBI" id="CHEBI:48828"/>
    </cofactor>
    <cofactor evidence="1">
        <name>Zn(2+)</name>
        <dbReference type="ChEBI" id="CHEBI:29105"/>
    </cofactor>
    <text evidence="1">Binds 1 divalent metal cation per subunit. Can use either Co(2+) or Zn(2+).</text>
</comment>
<comment type="cofactor">
    <cofactor evidence="1">
        <name>NAD(+)</name>
        <dbReference type="ChEBI" id="CHEBI:57540"/>
    </cofactor>
</comment>
<comment type="pathway">
    <text evidence="1">Metabolic intermediate biosynthesis; chorismate biosynthesis; chorismate from D-erythrose 4-phosphate and phosphoenolpyruvate: step 2/7.</text>
</comment>
<comment type="subcellular location">
    <subcellularLocation>
        <location evidence="1">Cytoplasm</location>
    </subcellularLocation>
</comment>
<comment type="similarity">
    <text evidence="1">Belongs to the sugar phosphate cyclases superfamily. Dehydroquinate synthase family.</text>
</comment>
<gene>
    <name evidence="1" type="primary">aroB</name>
    <name type="ordered locus">RPA0503</name>
</gene>
<organism>
    <name type="scientific">Rhodopseudomonas palustris (strain ATCC BAA-98 / CGA009)</name>
    <dbReference type="NCBI Taxonomy" id="258594"/>
    <lineage>
        <taxon>Bacteria</taxon>
        <taxon>Pseudomonadati</taxon>
        <taxon>Pseudomonadota</taxon>
        <taxon>Alphaproteobacteria</taxon>
        <taxon>Hyphomicrobiales</taxon>
        <taxon>Nitrobacteraceae</taxon>
        <taxon>Rhodopseudomonas</taxon>
    </lineage>
</organism>
<dbReference type="EC" id="4.2.3.4" evidence="1"/>
<dbReference type="EMBL" id="BX572594">
    <property type="protein sequence ID" value="CAE25947.1"/>
    <property type="molecule type" value="Genomic_DNA"/>
</dbReference>
<dbReference type="RefSeq" id="WP_011156071.1">
    <property type="nucleotide sequence ID" value="NZ_CP116810.1"/>
</dbReference>
<dbReference type="SMR" id="Q6NCG9"/>
<dbReference type="STRING" id="258594.RPA0503"/>
<dbReference type="GeneID" id="66891521"/>
<dbReference type="eggNOG" id="COG0337">
    <property type="taxonomic scope" value="Bacteria"/>
</dbReference>
<dbReference type="HOGENOM" id="CLU_001201_0_2_5"/>
<dbReference type="PhylomeDB" id="Q6NCG9"/>
<dbReference type="UniPathway" id="UPA00053">
    <property type="reaction ID" value="UER00085"/>
</dbReference>
<dbReference type="GO" id="GO:0005737">
    <property type="term" value="C:cytoplasm"/>
    <property type="evidence" value="ECO:0007669"/>
    <property type="project" value="UniProtKB-SubCell"/>
</dbReference>
<dbReference type="GO" id="GO:0003856">
    <property type="term" value="F:3-dehydroquinate synthase activity"/>
    <property type="evidence" value="ECO:0007669"/>
    <property type="project" value="UniProtKB-UniRule"/>
</dbReference>
<dbReference type="GO" id="GO:0046872">
    <property type="term" value="F:metal ion binding"/>
    <property type="evidence" value="ECO:0007669"/>
    <property type="project" value="UniProtKB-KW"/>
</dbReference>
<dbReference type="GO" id="GO:0000166">
    <property type="term" value="F:nucleotide binding"/>
    <property type="evidence" value="ECO:0007669"/>
    <property type="project" value="UniProtKB-KW"/>
</dbReference>
<dbReference type="GO" id="GO:0008652">
    <property type="term" value="P:amino acid biosynthetic process"/>
    <property type="evidence" value="ECO:0007669"/>
    <property type="project" value="UniProtKB-KW"/>
</dbReference>
<dbReference type="GO" id="GO:0009073">
    <property type="term" value="P:aromatic amino acid family biosynthetic process"/>
    <property type="evidence" value="ECO:0007669"/>
    <property type="project" value="UniProtKB-KW"/>
</dbReference>
<dbReference type="GO" id="GO:0009423">
    <property type="term" value="P:chorismate biosynthetic process"/>
    <property type="evidence" value="ECO:0007669"/>
    <property type="project" value="UniProtKB-UniRule"/>
</dbReference>
<dbReference type="CDD" id="cd08195">
    <property type="entry name" value="DHQS"/>
    <property type="match status" value="1"/>
</dbReference>
<dbReference type="FunFam" id="3.40.50.1970:FF:000001">
    <property type="entry name" value="3-dehydroquinate synthase"/>
    <property type="match status" value="1"/>
</dbReference>
<dbReference type="Gene3D" id="3.40.50.1970">
    <property type="match status" value="1"/>
</dbReference>
<dbReference type="Gene3D" id="1.20.1090.10">
    <property type="entry name" value="Dehydroquinate synthase-like - alpha domain"/>
    <property type="match status" value="1"/>
</dbReference>
<dbReference type="HAMAP" id="MF_00110">
    <property type="entry name" value="DHQ_synthase"/>
    <property type="match status" value="1"/>
</dbReference>
<dbReference type="InterPro" id="IPR050071">
    <property type="entry name" value="Dehydroquinate_synthase"/>
</dbReference>
<dbReference type="InterPro" id="IPR016037">
    <property type="entry name" value="DHQ_synth_AroB"/>
</dbReference>
<dbReference type="InterPro" id="IPR030963">
    <property type="entry name" value="DHQ_synth_fam"/>
</dbReference>
<dbReference type="InterPro" id="IPR030960">
    <property type="entry name" value="DHQS/DOIS_N"/>
</dbReference>
<dbReference type="InterPro" id="IPR056179">
    <property type="entry name" value="DHQS_C"/>
</dbReference>
<dbReference type="NCBIfam" id="TIGR01357">
    <property type="entry name" value="aroB"/>
    <property type="match status" value="1"/>
</dbReference>
<dbReference type="PANTHER" id="PTHR43622">
    <property type="entry name" value="3-DEHYDROQUINATE SYNTHASE"/>
    <property type="match status" value="1"/>
</dbReference>
<dbReference type="PANTHER" id="PTHR43622:SF7">
    <property type="entry name" value="3-DEHYDROQUINATE SYNTHASE, CHLOROPLASTIC"/>
    <property type="match status" value="1"/>
</dbReference>
<dbReference type="Pfam" id="PF01761">
    <property type="entry name" value="DHQ_synthase"/>
    <property type="match status" value="1"/>
</dbReference>
<dbReference type="Pfam" id="PF24621">
    <property type="entry name" value="DHQS_C"/>
    <property type="match status" value="1"/>
</dbReference>
<dbReference type="PIRSF" id="PIRSF001455">
    <property type="entry name" value="DHQ_synth"/>
    <property type="match status" value="1"/>
</dbReference>
<dbReference type="SUPFAM" id="SSF56796">
    <property type="entry name" value="Dehydroquinate synthase-like"/>
    <property type="match status" value="1"/>
</dbReference>
<reference key="1">
    <citation type="journal article" date="2004" name="Nat. Biotechnol.">
        <title>Complete genome sequence of the metabolically versatile photosynthetic bacterium Rhodopseudomonas palustris.</title>
        <authorList>
            <person name="Larimer F.W."/>
            <person name="Chain P."/>
            <person name="Hauser L."/>
            <person name="Lamerdin J.E."/>
            <person name="Malfatti S."/>
            <person name="Do L."/>
            <person name="Land M.L."/>
            <person name="Pelletier D.A."/>
            <person name="Beatty J.T."/>
            <person name="Lang A.S."/>
            <person name="Tabita F.R."/>
            <person name="Gibson J.L."/>
            <person name="Hanson T.E."/>
            <person name="Bobst C."/>
            <person name="Torres y Torres J.L."/>
            <person name="Peres C."/>
            <person name="Harrison F.H."/>
            <person name="Gibson J."/>
            <person name="Harwood C.S."/>
        </authorList>
    </citation>
    <scope>NUCLEOTIDE SEQUENCE [LARGE SCALE GENOMIC DNA]</scope>
    <source>
        <strain>ATCC BAA-98 / CGA009</strain>
    </source>
</reference>
<sequence>MNAPQKHSAPITVEVALGDRAYEIVIGRDVIASLGERIAKLRPGARTAIVTDRTVAKTWLKRTEEVLDQAGIAHASVIVGEGESSKSYAGLEQVCEALIAAKIERNDLVIALGGGVIGDLAGFSASLLRRGVDFVQVPTSLLAQVDSSVGGKTGINSPQGKNLIGTFHQPVLVLADTAILDTLSPRQFRAGYAEVAKYGALGDEAFFAWLEANHAELFSGGAAREHAVATSCRAKAAIVARDERETGDRALLNLGHTFGHALEAATGFSDRLFHGEGVAIGMVLAAEFSAERGMMPATDAERLAKHLAEVGLPTRLQDIAGFTQEGLADADRLMALMAQDKKVKRGELTFILMEGIGRAVIASKVEPAPVRDFLQRKLAQA</sequence>
<accession>Q6NCG9</accession>
<feature type="chain" id="PRO_0000231121" description="3-dehydroquinate synthase">
    <location>
        <begin position="1"/>
        <end position="381"/>
    </location>
</feature>
<feature type="binding site" evidence="1">
    <location>
        <begin position="81"/>
        <end position="86"/>
    </location>
    <ligand>
        <name>NAD(+)</name>
        <dbReference type="ChEBI" id="CHEBI:57540"/>
    </ligand>
</feature>
<feature type="binding site" evidence="1">
    <location>
        <begin position="115"/>
        <end position="119"/>
    </location>
    <ligand>
        <name>NAD(+)</name>
        <dbReference type="ChEBI" id="CHEBI:57540"/>
    </ligand>
</feature>
<feature type="binding site" evidence="1">
    <location>
        <begin position="139"/>
        <end position="140"/>
    </location>
    <ligand>
        <name>NAD(+)</name>
        <dbReference type="ChEBI" id="CHEBI:57540"/>
    </ligand>
</feature>
<feature type="binding site" evidence="1">
    <location>
        <position position="152"/>
    </location>
    <ligand>
        <name>NAD(+)</name>
        <dbReference type="ChEBI" id="CHEBI:57540"/>
    </ligand>
</feature>
<feature type="binding site" evidence="1">
    <location>
        <position position="161"/>
    </location>
    <ligand>
        <name>NAD(+)</name>
        <dbReference type="ChEBI" id="CHEBI:57540"/>
    </ligand>
</feature>
<feature type="binding site" evidence="1">
    <location>
        <position position="194"/>
    </location>
    <ligand>
        <name>Zn(2+)</name>
        <dbReference type="ChEBI" id="CHEBI:29105"/>
    </ligand>
</feature>
<feature type="binding site" evidence="1">
    <location>
        <position position="256"/>
    </location>
    <ligand>
        <name>Zn(2+)</name>
        <dbReference type="ChEBI" id="CHEBI:29105"/>
    </ligand>
</feature>
<feature type="binding site" evidence="1">
    <location>
        <position position="274"/>
    </location>
    <ligand>
        <name>Zn(2+)</name>
        <dbReference type="ChEBI" id="CHEBI:29105"/>
    </ligand>
</feature>
<name>AROB_RHOPA</name>
<evidence type="ECO:0000255" key="1">
    <source>
        <dbReference type="HAMAP-Rule" id="MF_00110"/>
    </source>
</evidence>
<proteinExistence type="inferred from homology"/>
<keyword id="KW-0028">Amino-acid biosynthesis</keyword>
<keyword id="KW-0057">Aromatic amino acid biosynthesis</keyword>
<keyword id="KW-0170">Cobalt</keyword>
<keyword id="KW-0963">Cytoplasm</keyword>
<keyword id="KW-0456">Lyase</keyword>
<keyword id="KW-0479">Metal-binding</keyword>
<keyword id="KW-0520">NAD</keyword>
<keyword id="KW-0547">Nucleotide-binding</keyword>
<keyword id="KW-0862">Zinc</keyword>
<protein>
    <recommendedName>
        <fullName evidence="1">3-dehydroquinate synthase</fullName>
        <shortName evidence="1">DHQS</shortName>
        <ecNumber evidence="1">4.2.3.4</ecNumber>
    </recommendedName>
</protein>